<comment type="function">
    <text>Tachykinins are active peptides which excite neurons, evoke behavioral responses, are potent vasodilators and secretagogues, and contract (directly or indirectly) many smooth muscles.</text>
</comment>
<comment type="subcellular location">
    <subcellularLocation>
        <location>Secreted</location>
    </subcellularLocation>
</comment>
<comment type="similarity">
    <text evidence="2">Belongs to the tachykinin family.</text>
</comment>
<proteinExistence type="evidence at protein level"/>
<evidence type="ECO:0000269" key="1">
    <source>
    </source>
</evidence>
<evidence type="ECO:0000305" key="2"/>
<evidence type="ECO:0007829" key="3">
    <source>
        <dbReference type="PDB" id="2NOU"/>
    </source>
</evidence>
<name>TKN1_SCYCA</name>
<accession>P08608</accession>
<organism>
    <name type="scientific">Scyliorhinus canicula</name>
    <name type="common">Small-spotted catshark</name>
    <name type="synonym">Squalus canicula</name>
    <dbReference type="NCBI Taxonomy" id="7830"/>
    <lineage>
        <taxon>Eukaryota</taxon>
        <taxon>Metazoa</taxon>
        <taxon>Chordata</taxon>
        <taxon>Craniata</taxon>
        <taxon>Vertebrata</taxon>
        <taxon>Chondrichthyes</taxon>
        <taxon>Elasmobranchii</taxon>
        <taxon>Galeomorphii</taxon>
        <taxon>Galeoidea</taxon>
        <taxon>Carcharhiniformes</taxon>
        <taxon>Scyliorhinidae</taxon>
        <taxon>Scyliorhinus</taxon>
    </lineage>
</organism>
<protein>
    <recommendedName>
        <fullName>Scyliorhinin-1</fullName>
    </recommendedName>
    <alternativeName>
        <fullName>Scyliorhinin I</fullName>
    </alternativeName>
</protein>
<sequence>AKFDKFYGLM</sequence>
<keyword id="KW-0002">3D-structure</keyword>
<keyword id="KW-0027">Amidation</keyword>
<keyword id="KW-0903">Direct protein sequencing</keyword>
<keyword id="KW-0527">Neuropeptide</keyword>
<keyword id="KW-0964">Secreted</keyword>
<feature type="peptide" id="PRO_0000044410" description="Scyliorhinin-1">
    <location>
        <begin position="1"/>
        <end position="10"/>
    </location>
</feature>
<feature type="modified residue" description="Methionine amide" evidence="1">
    <location>
        <position position="10"/>
    </location>
</feature>
<feature type="helix" evidence="3">
    <location>
        <begin position="5"/>
        <end position="9"/>
    </location>
</feature>
<reference key="1">
    <citation type="journal article" date="1986" name="FEBS Lett.">
        <title>Scyliorhinin I and II: two novel tachykinins from dogfish gut.</title>
        <authorList>
            <person name="Conlon J.M."/>
            <person name="Deacon C.F."/>
            <person name="O'Toole L."/>
            <person name="Thim L."/>
        </authorList>
    </citation>
    <scope>PROTEIN SEQUENCE</scope>
    <scope>AMIDATION AT MET-10</scope>
    <source>
        <tissue>Intestine</tissue>
    </source>
</reference>
<reference key="2">
    <citation type="journal article" date="1993" name="Eur. J. Biochem.">
        <title>Primary structures and biological activities of substance-P-related peptides from the brain of the dogfish, Scyliorhinus canicula.</title>
        <authorList>
            <person name="Waugh D."/>
            <person name="Wang Y."/>
            <person name="Hazon N."/>
            <person name="Balment R.J."/>
            <person name="Conlon J.M."/>
        </authorList>
    </citation>
    <scope>PROTEIN SEQUENCE</scope>
    <source>
        <tissue>Brain</tissue>
    </source>
</reference>
<dbReference type="PIR" id="A24867">
    <property type="entry name" value="A24867"/>
</dbReference>
<dbReference type="PDB" id="2NOU">
    <property type="method" value="NMR"/>
    <property type="chains" value="A=1-10"/>
</dbReference>
<dbReference type="PDBsum" id="2NOU"/>
<dbReference type="SMR" id="P08608"/>
<dbReference type="EvolutionaryTrace" id="P08608"/>
<dbReference type="GO" id="GO:0005576">
    <property type="term" value="C:extracellular region"/>
    <property type="evidence" value="ECO:0007669"/>
    <property type="project" value="UniProtKB-SubCell"/>
</dbReference>
<dbReference type="GO" id="GO:0007218">
    <property type="term" value="P:neuropeptide signaling pathway"/>
    <property type="evidence" value="ECO:0007669"/>
    <property type="project" value="UniProtKB-KW"/>
</dbReference>
<dbReference type="InterPro" id="IPR013055">
    <property type="entry name" value="Tachy_Neuro_lke_CS"/>
</dbReference>
<dbReference type="PROSITE" id="PS00267">
    <property type="entry name" value="TACHYKININ"/>
    <property type="match status" value="1"/>
</dbReference>